<feature type="chain" id="PRO_1000047163" description="2,3,4,5-tetrahydropyridine-2,6-dicarboxylate N-succinyltransferase">
    <location>
        <begin position="1"/>
        <end position="273"/>
    </location>
</feature>
<feature type="binding site" evidence="1">
    <location>
        <position position="104"/>
    </location>
    <ligand>
        <name>substrate</name>
    </ligand>
</feature>
<feature type="binding site" evidence="1">
    <location>
        <position position="141"/>
    </location>
    <ligand>
        <name>substrate</name>
    </ligand>
</feature>
<organism>
    <name type="scientific">Psychrobacter cryohalolentis (strain ATCC BAA-1226 / DSM 17306 / VKM B-2378 / K5)</name>
    <dbReference type="NCBI Taxonomy" id="335284"/>
    <lineage>
        <taxon>Bacteria</taxon>
        <taxon>Pseudomonadati</taxon>
        <taxon>Pseudomonadota</taxon>
        <taxon>Gammaproteobacteria</taxon>
        <taxon>Moraxellales</taxon>
        <taxon>Moraxellaceae</taxon>
        <taxon>Psychrobacter</taxon>
    </lineage>
</organism>
<protein>
    <recommendedName>
        <fullName evidence="1">2,3,4,5-tetrahydropyridine-2,6-dicarboxylate N-succinyltransferase</fullName>
        <ecNumber evidence="1">2.3.1.117</ecNumber>
    </recommendedName>
    <alternativeName>
        <fullName evidence="1">Tetrahydrodipicolinate N-succinyltransferase</fullName>
        <shortName evidence="1">THDP succinyltransferase</shortName>
        <shortName evidence="1">THP succinyltransferase</shortName>
        <shortName evidence="1">Tetrahydropicolinate succinylase</shortName>
    </alternativeName>
</protein>
<comment type="catalytic activity">
    <reaction evidence="1">
        <text>(S)-2,3,4,5-tetrahydrodipicolinate + succinyl-CoA + H2O = (S)-2-succinylamino-6-oxoheptanedioate + CoA</text>
        <dbReference type="Rhea" id="RHEA:17325"/>
        <dbReference type="ChEBI" id="CHEBI:15377"/>
        <dbReference type="ChEBI" id="CHEBI:15685"/>
        <dbReference type="ChEBI" id="CHEBI:16845"/>
        <dbReference type="ChEBI" id="CHEBI:57287"/>
        <dbReference type="ChEBI" id="CHEBI:57292"/>
        <dbReference type="EC" id="2.3.1.117"/>
    </reaction>
</comment>
<comment type="pathway">
    <text evidence="1">Amino-acid biosynthesis; L-lysine biosynthesis via DAP pathway; LL-2,6-diaminopimelate from (S)-tetrahydrodipicolinate (succinylase route): step 1/3.</text>
</comment>
<comment type="subunit">
    <text evidence="1">Homotrimer.</text>
</comment>
<comment type="subcellular location">
    <subcellularLocation>
        <location evidence="1">Cytoplasm</location>
    </subcellularLocation>
</comment>
<comment type="similarity">
    <text evidence="1">Belongs to the transferase hexapeptide repeat family.</text>
</comment>
<reference key="1">
    <citation type="submission" date="2006-03" db="EMBL/GenBank/DDBJ databases">
        <title>Complete sequence of chromosome of Psychrobacter cryohalolentis K5.</title>
        <authorList>
            <consortium name="US DOE Joint Genome Institute"/>
            <person name="Copeland A."/>
            <person name="Lucas S."/>
            <person name="Lapidus A."/>
            <person name="Barry K."/>
            <person name="Detter J.C."/>
            <person name="Glavina T."/>
            <person name="Hammon N."/>
            <person name="Israni S."/>
            <person name="Dalin E."/>
            <person name="Tice H."/>
            <person name="Pitluck S."/>
            <person name="Brettin T."/>
            <person name="Bruce D."/>
            <person name="Han C."/>
            <person name="Tapia R."/>
            <person name="Sims D.R."/>
            <person name="Gilna P."/>
            <person name="Schmutz J."/>
            <person name="Larimer F."/>
            <person name="Land M."/>
            <person name="Hauser L."/>
            <person name="Kyrpides N."/>
            <person name="Kim E."/>
            <person name="Richardson P."/>
        </authorList>
    </citation>
    <scope>NUCLEOTIDE SEQUENCE [LARGE SCALE GENOMIC DNA]</scope>
    <source>
        <strain>ATCC BAA-1226 / DSM 17306 / VKM B-2378 / K5</strain>
    </source>
</reference>
<keyword id="KW-0012">Acyltransferase</keyword>
<keyword id="KW-0028">Amino-acid biosynthesis</keyword>
<keyword id="KW-0963">Cytoplasm</keyword>
<keyword id="KW-0220">Diaminopimelate biosynthesis</keyword>
<keyword id="KW-0457">Lysine biosynthesis</keyword>
<keyword id="KW-0677">Repeat</keyword>
<keyword id="KW-0808">Transferase</keyword>
<proteinExistence type="inferred from homology"/>
<gene>
    <name evidence="1" type="primary">dapD</name>
    <name type="ordered locus">Pcryo_0725</name>
</gene>
<evidence type="ECO:0000255" key="1">
    <source>
        <dbReference type="HAMAP-Rule" id="MF_00811"/>
    </source>
</evidence>
<sequence>MSLQQTIEQAFENRNEYSPATMPQDVRDAINQVLEQLDNGTLRVAEKKDGEWVVNQWAKKAVLLSFRLNDNYVQAAGEHVQFYDKVPTKFANWTEAQFKEAGVRVVPPAVARKGSYIAPGAVLMPSYVNIGAYVDQGAMVDTWATVGSCAQIGKNVHLSGGVGIGGVLEPLQANPTIIEDNCFIGARSEIVEGVIVEEGAVISMGVYIGQSTRIYDRETGEIHRGRVPAGSVVVPGSLPSEDGTHSLYAAIIVKKVDAQTRAKTSVNELLRLA</sequence>
<name>DAPD_PSYCK</name>
<accession>Q1QCU5</accession>
<dbReference type="EC" id="2.3.1.117" evidence="1"/>
<dbReference type="EMBL" id="CP000323">
    <property type="protein sequence ID" value="ABE74508.1"/>
    <property type="molecule type" value="Genomic_DNA"/>
</dbReference>
<dbReference type="RefSeq" id="WP_011513075.1">
    <property type="nucleotide sequence ID" value="NC_007969.1"/>
</dbReference>
<dbReference type="SMR" id="Q1QCU5"/>
<dbReference type="STRING" id="335284.Pcryo_0725"/>
<dbReference type="KEGG" id="pcr:Pcryo_0725"/>
<dbReference type="eggNOG" id="COG2171">
    <property type="taxonomic scope" value="Bacteria"/>
</dbReference>
<dbReference type="HOGENOM" id="CLU_050859_0_1_6"/>
<dbReference type="UniPathway" id="UPA00034">
    <property type="reaction ID" value="UER00019"/>
</dbReference>
<dbReference type="Proteomes" id="UP000002425">
    <property type="component" value="Chromosome"/>
</dbReference>
<dbReference type="GO" id="GO:0005737">
    <property type="term" value="C:cytoplasm"/>
    <property type="evidence" value="ECO:0007669"/>
    <property type="project" value="UniProtKB-SubCell"/>
</dbReference>
<dbReference type="GO" id="GO:0008666">
    <property type="term" value="F:2,3,4,5-tetrahydropyridine-2,6-dicarboxylate N-succinyltransferase activity"/>
    <property type="evidence" value="ECO:0007669"/>
    <property type="project" value="UniProtKB-UniRule"/>
</dbReference>
<dbReference type="GO" id="GO:0016779">
    <property type="term" value="F:nucleotidyltransferase activity"/>
    <property type="evidence" value="ECO:0007669"/>
    <property type="project" value="TreeGrafter"/>
</dbReference>
<dbReference type="GO" id="GO:0019877">
    <property type="term" value="P:diaminopimelate biosynthetic process"/>
    <property type="evidence" value="ECO:0007669"/>
    <property type="project" value="UniProtKB-UniRule"/>
</dbReference>
<dbReference type="GO" id="GO:0009089">
    <property type="term" value="P:lysine biosynthetic process via diaminopimelate"/>
    <property type="evidence" value="ECO:0007669"/>
    <property type="project" value="UniProtKB-UniRule"/>
</dbReference>
<dbReference type="CDD" id="cd03350">
    <property type="entry name" value="LbH_THP_succinylT"/>
    <property type="match status" value="1"/>
</dbReference>
<dbReference type="Gene3D" id="2.160.10.10">
    <property type="entry name" value="Hexapeptide repeat proteins"/>
    <property type="match status" value="1"/>
</dbReference>
<dbReference type="Gene3D" id="1.10.166.10">
    <property type="entry name" value="Tetrahydrodipicolinate-N-succinyltransferase, N-terminal domain"/>
    <property type="match status" value="1"/>
</dbReference>
<dbReference type="HAMAP" id="MF_00811">
    <property type="entry name" value="DapD"/>
    <property type="match status" value="1"/>
</dbReference>
<dbReference type="InterPro" id="IPR005664">
    <property type="entry name" value="DapD_Trfase_Hexpep_rpt_fam"/>
</dbReference>
<dbReference type="InterPro" id="IPR001451">
    <property type="entry name" value="Hexapep"/>
</dbReference>
<dbReference type="InterPro" id="IPR018357">
    <property type="entry name" value="Hexapep_transf_CS"/>
</dbReference>
<dbReference type="InterPro" id="IPR023180">
    <property type="entry name" value="THP_succinylTrfase_dom1"/>
</dbReference>
<dbReference type="InterPro" id="IPR037133">
    <property type="entry name" value="THP_succinylTrfase_N_sf"/>
</dbReference>
<dbReference type="InterPro" id="IPR011004">
    <property type="entry name" value="Trimer_LpxA-like_sf"/>
</dbReference>
<dbReference type="NCBIfam" id="TIGR00965">
    <property type="entry name" value="dapD"/>
    <property type="match status" value="1"/>
</dbReference>
<dbReference type="NCBIfam" id="NF008808">
    <property type="entry name" value="PRK11830.1"/>
    <property type="match status" value="1"/>
</dbReference>
<dbReference type="PANTHER" id="PTHR19136:SF52">
    <property type="entry name" value="2,3,4,5-TETRAHYDROPYRIDINE-2,6-DICARBOXYLATE N-SUCCINYLTRANSFERASE"/>
    <property type="match status" value="1"/>
</dbReference>
<dbReference type="PANTHER" id="PTHR19136">
    <property type="entry name" value="MOLYBDENUM COFACTOR GUANYLYLTRANSFERASE"/>
    <property type="match status" value="1"/>
</dbReference>
<dbReference type="Pfam" id="PF14602">
    <property type="entry name" value="Hexapep_2"/>
    <property type="match status" value="1"/>
</dbReference>
<dbReference type="Pfam" id="PF14805">
    <property type="entry name" value="THDPS_N_2"/>
    <property type="match status" value="1"/>
</dbReference>
<dbReference type="SUPFAM" id="SSF51161">
    <property type="entry name" value="Trimeric LpxA-like enzymes"/>
    <property type="match status" value="1"/>
</dbReference>
<dbReference type="PROSITE" id="PS00101">
    <property type="entry name" value="HEXAPEP_TRANSFERASES"/>
    <property type="match status" value="1"/>
</dbReference>